<protein>
    <recommendedName>
        <fullName>Aspartate aminotransferase, mitochondrial</fullName>
        <shortName>mAspAT</shortName>
        <ecNumber evidence="6">2.6.1.1</ecNumber>
        <ecNumber evidence="6">2.6.1.7</ecNumber>
    </recommendedName>
    <alternativeName>
        <fullName>Fatty acid-binding protein</fullName>
        <shortName>FABP-1</shortName>
    </alternativeName>
    <alternativeName>
        <fullName>Glutamate oxaloacetate transaminase 2</fullName>
    </alternativeName>
    <alternativeName>
        <fullName>Kynurenine aminotransferase 4</fullName>
    </alternativeName>
    <alternativeName>
        <fullName>Kynurenine aminotransferase IV</fullName>
    </alternativeName>
    <alternativeName>
        <fullName>Kynurenine--oxoglutarate transaminase 4</fullName>
    </alternativeName>
    <alternativeName>
        <fullName>Kynurenine--oxoglutarate transaminase IV</fullName>
    </alternativeName>
    <alternativeName>
        <fullName>Plasma membrane-associated fatty acid-binding protein</fullName>
        <shortName>FABPpm</shortName>
    </alternativeName>
    <alternativeName>
        <fullName>Transaminase A</fullName>
    </alternativeName>
</protein>
<reference key="1">
    <citation type="journal article" date="1987" name="Biochem. Biophys. Res. Commun.">
        <title>Molecular cloning and in vivo expression of a precursor to rat mitochondrial aspartate aminotransferase.</title>
        <authorList>
            <person name="Mattingly J.R. Jr."/>
            <person name="Rodriguez-Berrocal F.J."/>
            <person name="Gordon J."/>
            <person name="Iriarte A."/>
            <person name="Martinez-Carrion M."/>
        </authorList>
    </citation>
    <scope>NUCLEOTIDE SEQUENCE [MRNA]</scope>
</reference>
<reference key="2">
    <citation type="journal article" date="2004" name="Genome Res.">
        <title>The status, quality, and expansion of the NIH full-length cDNA project: the Mammalian Gene Collection (MGC).</title>
        <authorList>
            <consortium name="The MGC Project Team"/>
        </authorList>
    </citation>
    <scope>NUCLEOTIDE SEQUENCE [LARGE SCALE MRNA]</scope>
    <source>
        <tissue>Prostate</tissue>
    </source>
</reference>
<reference key="3">
    <citation type="journal article" date="1995" name="J. Biol. Chem.">
        <title>Androgen modulation of multiple transcription start sites of the mitochondrial aspartate aminotransferase gene in rat prostate.</title>
        <authorList>
            <person name="Juang H.H."/>
            <person name="Costello L.C."/>
            <person name="Franklin R.B."/>
        </authorList>
    </citation>
    <scope>NUCLEOTIDE SEQUENCE [GENOMIC DNA] OF 1-30</scope>
    <source>
        <strain>Wistar</strain>
        <tissue>Liver</tissue>
    </source>
</reference>
<reference key="4">
    <citation type="journal article" date="1980" name="Biochem. Biophys. Res. Commun.">
        <title>Primary structure of mitochondrial glutamic oxaloacetic transaminase from rat liver: comparison with that of the pig heart isozyme.</title>
        <authorList>
            <person name="Huynh Q.K."/>
            <person name="Sakakibara R."/>
            <person name="Watanabe T."/>
            <person name="Wada H."/>
        </authorList>
    </citation>
    <scope>PROTEIN SEQUENCE OF 30-430</scope>
    <source>
        <tissue>Liver</tissue>
    </source>
</reference>
<reference key="5">
    <citation type="journal article" date="1981" name="J. Biochem.">
        <title>The complete amino acid sequence of mitochondrial glutamic oxaloacetic transaminase from rat liver.</title>
        <authorList>
            <person name="Huynh Q.K."/>
            <person name="Sakakibara R."/>
            <person name="Watanabe T."/>
            <person name="Wada H."/>
        </authorList>
    </citation>
    <scope>PROTEIN SEQUENCE OF 30-430</scope>
    <source>
        <tissue>Liver</tissue>
    </source>
</reference>
<reference key="6">
    <citation type="journal article" date="1993" name="Am. J. Physiol.">
        <title>Comparison of plasma membrane FABP and mitochondrial isoform of aspartate aminotransferase from rat liver.</title>
        <authorList>
            <person name="Stump D.D."/>
            <person name="Zhou S.-L."/>
            <person name="Berk P.D."/>
        </authorList>
    </citation>
    <scope>PROTEIN SEQUENCE OF 30-64</scope>
    <source>
        <strain>Sprague-Dawley</strain>
        <tissue>Liver</tissue>
    </source>
</reference>
<reference key="7">
    <citation type="journal article" date="2007" name="J. Neurochem.">
        <title>Mitochondrial aspartate aminotransferase: a third kynurenate-producing enzyme in the mammalian brain.</title>
        <authorList>
            <person name="Guidetti P."/>
            <person name="Amori L."/>
            <person name="Sapko M.T."/>
            <person name="Okuno E."/>
            <person name="Schwarcz R."/>
        </authorList>
    </citation>
    <scope>PROTEIN SEQUENCE OF 30-42</scope>
    <scope>CATALYTIC ACTIVITY</scope>
    <scope>FUNCTION</scope>
</reference>
<reference key="8">
    <citation type="submission" date="2007-07" db="UniProtKB">
        <authorList>
            <person name="Lubec G."/>
            <person name="Afjehi-Sadat L."/>
            <person name="Chen W.-Q."/>
            <person name="Kang S.U."/>
        </authorList>
    </citation>
    <scope>PROTEIN SEQUENCE OF 60-68; 91-122; 126-147; 171-180; 186-200; 280-296; 310-337; 356-363 AND 397-404</scope>
    <scope>IDENTIFICATION BY MASS SPECTROMETRY</scope>
    <source>
        <strain>Sprague-Dawley</strain>
        <tissue>Brain</tissue>
        <tissue>Hippocampus</tissue>
        <tissue>Spinal cord</tissue>
    </source>
</reference>
<reference key="9">
    <citation type="journal article" date="1986" name="Biochem. Biophys. Res. Commun.">
        <title>Molecular cloning of rat mitochondrial glutamic oxaloacetic transaminase mRNA and regulation of its expression in regenerating liver.</title>
        <authorList>
            <person name="Horio Y."/>
            <person name="Sakakibara R."/>
            <person name="Tanaka T."/>
            <person name="Taketoshi M."/>
            <person name="Obaru K."/>
            <person name="Shimada K."/>
            <person name="Morino Y."/>
            <person name="Wada H."/>
        </authorList>
    </citation>
    <scope>NUCLEOTIDE SEQUENCE [MRNA] OF 279-329</scope>
</reference>
<reference key="10">
    <citation type="journal article" date="2002" name="Histol. Histopathol.">
        <title>Immunogold localization of mitochondrial aspartate aminotransferase in mitochondria and on the cell surface in normal rat tissues.</title>
        <authorList>
            <person name="Cechetto J.D."/>
            <person name="Sadacharan S.K."/>
            <person name="Berk P.D."/>
            <person name="Gupta R.S."/>
        </authorList>
    </citation>
    <scope>SUBCELLULAR LOCATION</scope>
    <scope>TISSUE SPECIFICITY</scope>
</reference>
<sequence>MALLHSGRVLSGMAAAFHPGLAAAASARASSWWTHVEMGPPDPILGVTEAFKRDTNSKKMNLGVGAYRDDNGKPYVLPSVRKAEAQIAGKNLDKEYLPIGGLADFCKASAELALGENSEVLKSGRFVTVQTISGTGALRVGASFLQRFFKFSRDVFLPKPSWGNHTPIFRDAGMQLQGYRYYDPKTCGFDFSGALEDISKIPEQSVLLLHACAHNPTGVDPRPEQWKEMAAVVKKKNLFAFFDMAYQGFASGDGDKDAWAVRHFIEQGINVCLCQSYAKNMGLYGERVGAFTVVCKDAEEAKRVESQLKILIRPLYSNPPLNGARIAATILTSPDLRKQWLQEVKGMADRIISMRTQLVSNLKKEGSSHNWQHITDQIGMFCFTGLKPEQVERLTKEFSVYMTKDGRISVAGVTSGNVGYLAHAIHQVTK</sequence>
<feature type="transit peptide" description="Mitochondrion" evidence="6 7 8 9">
    <location>
        <begin position="1"/>
        <end position="29"/>
    </location>
</feature>
<feature type="chain" id="PRO_0000001218" description="Aspartate aminotransferase, mitochondrial">
    <location>
        <begin position="30"/>
        <end position="430"/>
    </location>
</feature>
<feature type="binding site" evidence="1">
    <location>
        <position position="65"/>
    </location>
    <ligand>
        <name>substrate</name>
    </ligand>
</feature>
<feature type="binding site" evidence="1">
    <location>
        <position position="162"/>
    </location>
    <ligand>
        <name>substrate</name>
    </ligand>
</feature>
<feature type="binding site" evidence="1">
    <location>
        <position position="215"/>
    </location>
    <ligand>
        <name>substrate</name>
    </ligand>
</feature>
<feature type="binding site" evidence="1">
    <location>
        <position position="407"/>
    </location>
    <ligand>
        <name>substrate</name>
    </ligand>
</feature>
<feature type="modified residue" description="Phosphothreonine" evidence="2">
    <location>
        <position position="48"/>
    </location>
</feature>
<feature type="modified residue" description="N6-acetyllysine" evidence="3">
    <location>
        <position position="59"/>
    </location>
</feature>
<feature type="modified residue" description="N6-acetyllysine; alternate" evidence="2">
    <location>
        <position position="73"/>
    </location>
</feature>
<feature type="modified residue" description="N6-succinyllysine; alternate" evidence="3">
    <location>
        <position position="73"/>
    </location>
</feature>
<feature type="modified residue" description="N6-acetyllysine" evidence="3">
    <location>
        <position position="82"/>
    </location>
</feature>
<feature type="modified residue" description="N6-acetyllysine; alternate" evidence="2">
    <location>
        <position position="90"/>
    </location>
</feature>
<feature type="modified residue" description="N6-succinyllysine; alternate" evidence="3">
    <location>
        <position position="90"/>
    </location>
</feature>
<feature type="modified residue" description="3'-nitrotyrosine; alternate" evidence="3">
    <location>
        <position position="96"/>
    </location>
</feature>
<feature type="modified residue" description="Phosphotyrosine; alternate" evidence="2">
    <location>
        <position position="96"/>
    </location>
</feature>
<feature type="modified residue" description="N6-acetyllysine; alternate" evidence="3">
    <location>
        <position position="107"/>
    </location>
</feature>
<feature type="modified residue" description="N6-succinyllysine; alternate" evidence="3">
    <location>
        <position position="107"/>
    </location>
</feature>
<feature type="modified residue" description="N6-acetyllysine; alternate" evidence="3">
    <location>
        <position position="122"/>
    </location>
</feature>
<feature type="modified residue" description="N6-succinyllysine; alternate" evidence="3">
    <location>
        <position position="122"/>
    </location>
</feature>
<feature type="modified residue" description="Phosphoserine" evidence="2">
    <location>
        <position position="143"/>
    </location>
</feature>
<feature type="modified residue" description="N6-acetyllysine; alternate" evidence="2">
    <location>
        <position position="159"/>
    </location>
</feature>
<feature type="modified residue" description="N6-succinyllysine; alternate" evidence="3">
    <location>
        <position position="159"/>
    </location>
</feature>
<feature type="modified residue" description="N6-acetyllysine; alternate" evidence="3">
    <location>
        <position position="185"/>
    </location>
</feature>
<feature type="modified residue" description="N6-succinyllysine; alternate" evidence="3">
    <location>
        <position position="185"/>
    </location>
</feature>
<feature type="modified residue" description="N6-succinyllysine" evidence="3">
    <location>
        <position position="227"/>
    </location>
</feature>
<feature type="modified residue" description="N6-acetyllysine" evidence="2">
    <location>
        <position position="234"/>
    </location>
</feature>
<feature type="modified residue" description="N6-(pyridoxal phosphate)lysine; alternate">
    <location>
        <position position="279"/>
    </location>
</feature>
<feature type="modified residue" description="N6-acetyllysine; alternate" evidence="3">
    <location>
        <position position="279"/>
    </location>
</feature>
<feature type="modified residue" description="N6-acetyllysine; alternate" evidence="2">
    <location>
        <position position="296"/>
    </location>
</feature>
<feature type="modified residue" description="N6-succinyllysine; alternate" evidence="3">
    <location>
        <position position="296"/>
    </location>
</feature>
<feature type="modified residue" description="N6-acetyllysine" evidence="3">
    <location>
        <position position="302"/>
    </location>
</feature>
<feature type="modified residue" description="N6-acetyllysine; alternate" evidence="3">
    <location>
        <position position="309"/>
    </location>
</feature>
<feature type="modified residue" description="N6-succinyllysine; alternate" evidence="4">
    <location>
        <position position="309"/>
    </location>
</feature>
<feature type="modified residue" description="Asymmetric dimethylarginine" evidence="3">
    <location>
        <position position="313"/>
    </location>
</feature>
<feature type="modified residue" description="N6-acetyllysine; alternate" evidence="3">
    <location>
        <position position="338"/>
    </location>
</feature>
<feature type="modified residue" description="N6-succinyllysine; alternate" evidence="3">
    <location>
        <position position="338"/>
    </location>
</feature>
<feature type="modified residue" description="N6-acetyllysine" evidence="3">
    <location>
        <position position="345"/>
    </location>
</feature>
<feature type="modified residue" description="N6-acetyllysine; alternate" evidence="3">
    <location>
        <position position="363"/>
    </location>
</feature>
<feature type="modified residue" description="N6-succinyllysine; alternate" evidence="3">
    <location>
        <position position="363"/>
    </location>
</feature>
<feature type="modified residue" description="N6-acetyllysine" evidence="3">
    <location>
        <position position="364"/>
    </location>
</feature>
<feature type="modified residue" description="N6-acetyllysine" evidence="3">
    <location>
        <position position="387"/>
    </location>
</feature>
<feature type="modified residue" description="N6-acetyllysine; alternate" evidence="2">
    <location>
        <position position="396"/>
    </location>
</feature>
<feature type="modified residue" description="N6-succinyllysine; alternate" evidence="3">
    <location>
        <position position="396"/>
    </location>
</feature>
<feature type="modified residue" description="N6-acetyllysine; alternate" evidence="2">
    <location>
        <position position="404"/>
    </location>
</feature>
<feature type="modified residue" description="N6-succinyllysine; alternate" evidence="3">
    <location>
        <position position="404"/>
    </location>
</feature>
<feature type="sequence conflict" description="In Ref. 3; AAC13868." evidence="10" ref="3">
    <original>S</original>
    <variation>R</variation>
    <location>
        <position position="30"/>
    </location>
</feature>
<feature type="sequence conflict" description="In Ref. 4; AA sequence and 5; AA sequence." evidence="10" ref="4 5">
    <original>W</original>
    <variation>G</variation>
    <location>
        <position position="162"/>
    </location>
</feature>
<feature type="sequence conflict" description="In Ref. 4; AA sequence and 5; AA sequence." evidence="10" ref="4 5">
    <original>PIF</original>
    <variation>EIA</variation>
    <location>
        <begin position="167"/>
        <end position="169"/>
    </location>
</feature>
<feature type="sequence conflict" description="In Ref. 4; AA sequence and 5; AA sequence." evidence="10" ref="4 5">
    <original>Q</original>
    <variation>E</variation>
    <location>
        <position position="177"/>
    </location>
</feature>
<feature type="sequence conflict" description="In Ref. 4; AA sequence and 5; AA sequence." evidence="10" ref="4 5">
    <original>V</original>
    <variation>Y</variation>
    <location>
        <position position="232"/>
    </location>
</feature>
<feature type="sequence conflict" description="In Ref. 4; AA sequence and 5; AA sequence." evidence="10" ref="4 5">
    <original>D</original>
    <variation>N</variation>
    <location>
        <position position="255"/>
    </location>
</feature>
<feature type="sequence conflict" description="In Ref. 4; AA sequence and 5; AA sequence." evidence="10" ref="4 5">
    <original>KQ</original>
    <variation>QG</variation>
    <location>
        <begin position="338"/>
        <end position="339"/>
    </location>
</feature>
<feature type="sequence conflict" description="In Ref. 4; AA sequence and 5; AA sequence." evidence="10" ref="4 5">
    <original>I</original>
    <variation>G</variation>
    <location>
        <position position="352"/>
    </location>
</feature>
<feature type="sequence conflict" description="In Ref. 4; AA sequence and 5; AA sequence." evidence="10" ref="4 5">
    <original>L</original>
    <variation>I</variation>
    <location>
        <position position="386"/>
    </location>
</feature>
<feature type="sequence conflict" description="In Ref. 4; AA sequence and 5; AA sequence." evidence="10" ref="4 5">
    <original>V</original>
    <variation>I</variation>
    <location>
        <position position="400"/>
    </location>
</feature>
<keyword id="KW-0007">Acetylation</keyword>
<keyword id="KW-0032">Aminotransferase</keyword>
<keyword id="KW-1003">Cell membrane</keyword>
<keyword id="KW-0903">Direct protein sequencing</keyword>
<keyword id="KW-0445">Lipid transport</keyword>
<keyword id="KW-0472">Membrane</keyword>
<keyword id="KW-0488">Methylation</keyword>
<keyword id="KW-0496">Mitochondrion</keyword>
<keyword id="KW-0944">Nitration</keyword>
<keyword id="KW-0597">Phosphoprotein</keyword>
<keyword id="KW-0663">Pyridoxal phosphate</keyword>
<keyword id="KW-1185">Reference proteome</keyword>
<keyword id="KW-0808">Transferase</keyword>
<keyword id="KW-0809">Transit peptide</keyword>
<keyword id="KW-0813">Transport</keyword>
<comment type="function">
    <text evidence="1 6">Catalyzes the irreversible transamination of the L-tryptophan metabolite L-kynurenine to form kynurenic acid (KA). As a member of the malate-aspartate shuttle, it has a key role in the intracellular NAD(H) redox balance. Is important for metabolite exchange between mitochondria and cytosol, and for amino acid metabolism. Facilitates cellular uptake of long-chain free fatty acids (By similarity).</text>
</comment>
<comment type="catalytic activity">
    <reaction evidence="6">
        <text>L-aspartate + 2-oxoglutarate = oxaloacetate + L-glutamate</text>
        <dbReference type="Rhea" id="RHEA:21824"/>
        <dbReference type="ChEBI" id="CHEBI:16452"/>
        <dbReference type="ChEBI" id="CHEBI:16810"/>
        <dbReference type="ChEBI" id="CHEBI:29985"/>
        <dbReference type="ChEBI" id="CHEBI:29991"/>
        <dbReference type="EC" id="2.6.1.1"/>
    </reaction>
</comment>
<comment type="catalytic activity">
    <reaction evidence="6">
        <text>L-kynurenine + 2-oxoglutarate = kynurenate + L-glutamate + H2O</text>
        <dbReference type="Rhea" id="RHEA:65560"/>
        <dbReference type="ChEBI" id="CHEBI:15377"/>
        <dbReference type="ChEBI" id="CHEBI:16810"/>
        <dbReference type="ChEBI" id="CHEBI:29985"/>
        <dbReference type="ChEBI" id="CHEBI:57959"/>
        <dbReference type="ChEBI" id="CHEBI:58454"/>
        <dbReference type="EC" id="2.6.1.7"/>
    </reaction>
</comment>
<comment type="cofactor">
    <cofactor>
        <name>pyridoxal 5'-phosphate</name>
        <dbReference type="ChEBI" id="CHEBI:597326"/>
    </cofactor>
</comment>
<comment type="subunit">
    <text>Homodimer.</text>
</comment>
<comment type="subcellular location">
    <subcellularLocation>
        <location evidence="5">Mitochondrion matrix</location>
    </subcellularLocation>
    <subcellularLocation>
        <location evidence="5">Cell membrane</location>
    </subcellularLocation>
    <text>Located in the mitochondria of liver, pancreas, spleen, heart, pituitary gland and submandibular gland cells. In kidney, located in the mitochondria, on the cell surface of regions with protrusions in distal tubules, on the apical cell surface of protrusions along the microvilli in cortical collecting ducts, in condensing vacuoles, on the cell surface at cell boundaries of adjoining kidney cells and on the cell surface of endothelial cells lining capillaries in the glomerulus. Also located at the cell surface of endothelial cells lining arterioles and on the cell surface of lymphocytes.</text>
</comment>
<comment type="tissue specificity">
    <text evidence="5">Expressed in all tissues tested: liver, pancreas, kidney, heart, spleen, arterioles, and lymphocytes.</text>
</comment>
<comment type="miscellaneous">
    <text>In eukaryotes there are cytoplasmic, mitochondrial and chloroplastic isozymes.</text>
</comment>
<comment type="similarity">
    <text evidence="10">Belongs to the class-I pyridoxal-phosphate-dependent aminotransferase family.</text>
</comment>
<name>AATM_RAT</name>
<gene>
    <name type="primary">Got2</name>
    <name type="synonym">Maat</name>
</gene>
<dbReference type="EC" id="2.6.1.1" evidence="6"/>
<dbReference type="EC" id="2.6.1.7" evidence="6"/>
<dbReference type="EMBL" id="M18467">
    <property type="protein sequence ID" value="AAB54275.1"/>
    <property type="molecule type" value="mRNA"/>
</dbReference>
<dbReference type="EMBL" id="BC061792">
    <property type="protein sequence ID" value="AAH61792.1"/>
    <property type="molecule type" value="mRNA"/>
</dbReference>
<dbReference type="EMBL" id="U21158">
    <property type="protein sequence ID" value="AAC13868.1"/>
    <property type="molecule type" value="Genomic_DNA"/>
</dbReference>
<dbReference type="EMBL" id="M12709">
    <property type="protein sequence ID" value="AAA41267.1"/>
    <property type="molecule type" value="mRNA"/>
</dbReference>
<dbReference type="PIR" id="A28005">
    <property type="entry name" value="XNRTDM"/>
</dbReference>
<dbReference type="PIR" id="I55427">
    <property type="entry name" value="I55427"/>
</dbReference>
<dbReference type="RefSeq" id="NP_037309.1">
    <property type="nucleotide sequence ID" value="NM_013177.2"/>
</dbReference>
<dbReference type="SMR" id="P00507"/>
<dbReference type="BioGRID" id="247750">
    <property type="interactions" value="4"/>
</dbReference>
<dbReference type="FunCoup" id="P00507">
    <property type="interactions" value="2754"/>
</dbReference>
<dbReference type="IntAct" id="P00507">
    <property type="interactions" value="5"/>
</dbReference>
<dbReference type="MINT" id="P00507"/>
<dbReference type="STRING" id="10116.ENSRNOP00000015956"/>
<dbReference type="ChEMBL" id="CHEMBL2351"/>
<dbReference type="CarbonylDB" id="P00507"/>
<dbReference type="GlyGen" id="P00507">
    <property type="glycosylation" value="6 sites, 1 O-linked glycan (6 sites)"/>
</dbReference>
<dbReference type="iPTMnet" id="P00507"/>
<dbReference type="PhosphoSitePlus" id="P00507"/>
<dbReference type="SwissPalm" id="P00507"/>
<dbReference type="jPOST" id="P00507"/>
<dbReference type="PaxDb" id="10116-ENSRNOP00000015956"/>
<dbReference type="GeneID" id="25721"/>
<dbReference type="KEGG" id="rno:25721"/>
<dbReference type="UCSC" id="RGD:2722">
    <property type="organism name" value="rat"/>
</dbReference>
<dbReference type="AGR" id="RGD:2722"/>
<dbReference type="CTD" id="2806"/>
<dbReference type="RGD" id="2722">
    <property type="gene designation" value="Got2"/>
</dbReference>
<dbReference type="VEuPathDB" id="HostDB:ENSRNOG00000011782"/>
<dbReference type="eggNOG" id="KOG1411">
    <property type="taxonomic scope" value="Eukaryota"/>
</dbReference>
<dbReference type="HOGENOM" id="CLU_032440_1_2_1"/>
<dbReference type="InParanoid" id="P00507"/>
<dbReference type="OrthoDB" id="6752799at2759"/>
<dbReference type="PhylomeDB" id="P00507"/>
<dbReference type="TreeFam" id="TF300641"/>
<dbReference type="BioCyc" id="MetaCyc:MONOMER-15069"/>
<dbReference type="BRENDA" id="2.6.1.1">
    <property type="organism ID" value="5301"/>
</dbReference>
<dbReference type="Reactome" id="R-RNO-389661">
    <property type="pathway name" value="Glyoxylate metabolism and glycine degradation"/>
</dbReference>
<dbReference type="Reactome" id="R-RNO-8963693">
    <property type="pathway name" value="Aspartate and asparagine metabolism"/>
</dbReference>
<dbReference type="Reactome" id="R-RNO-8964539">
    <property type="pathway name" value="Glutamate and glutamine metabolism"/>
</dbReference>
<dbReference type="Reactome" id="R-RNO-9856872">
    <property type="pathway name" value="Malate-aspartate shuttle"/>
</dbReference>
<dbReference type="SABIO-RK" id="P00507"/>
<dbReference type="PRO" id="PR:P00507"/>
<dbReference type="Proteomes" id="UP000002494">
    <property type="component" value="Chromosome 19"/>
</dbReference>
<dbReference type="Bgee" id="ENSRNOG00000011782">
    <property type="expression patterns" value="Expressed in heart and 19 other cell types or tissues"/>
</dbReference>
<dbReference type="GO" id="GO:0009986">
    <property type="term" value="C:cell surface"/>
    <property type="evidence" value="ECO:0000314"/>
    <property type="project" value="RGD"/>
</dbReference>
<dbReference type="GO" id="GO:0005743">
    <property type="term" value="C:mitochondrial inner membrane"/>
    <property type="evidence" value="ECO:0000314"/>
    <property type="project" value="RGD"/>
</dbReference>
<dbReference type="GO" id="GO:0005759">
    <property type="term" value="C:mitochondrial matrix"/>
    <property type="evidence" value="ECO:0000266"/>
    <property type="project" value="RGD"/>
</dbReference>
<dbReference type="GO" id="GO:0005739">
    <property type="term" value="C:mitochondrion"/>
    <property type="evidence" value="ECO:0000250"/>
    <property type="project" value="UniProtKB"/>
</dbReference>
<dbReference type="GO" id="GO:0043204">
    <property type="term" value="C:perikaryon"/>
    <property type="evidence" value="ECO:0000314"/>
    <property type="project" value="RGD"/>
</dbReference>
<dbReference type="GO" id="GO:0005886">
    <property type="term" value="C:plasma membrane"/>
    <property type="evidence" value="ECO:0000266"/>
    <property type="project" value="RGD"/>
</dbReference>
<dbReference type="GO" id="GO:0032991">
    <property type="term" value="C:protein-containing complex"/>
    <property type="evidence" value="ECO:0000314"/>
    <property type="project" value="RGD"/>
</dbReference>
<dbReference type="GO" id="GO:0042383">
    <property type="term" value="C:sarcolemma"/>
    <property type="evidence" value="ECO:0000314"/>
    <property type="project" value="RGD"/>
</dbReference>
<dbReference type="GO" id="GO:0030315">
    <property type="term" value="C:T-tubule"/>
    <property type="evidence" value="ECO:0000314"/>
    <property type="project" value="RGD"/>
</dbReference>
<dbReference type="GO" id="GO:0016597">
    <property type="term" value="F:amino acid binding"/>
    <property type="evidence" value="ECO:0000314"/>
    <property type="project" value="RGD"/>
</dbReference>
<dbReference type="GO" id="GO:0031406">
    <property type="term" value="F:carboxylic acid binding"/>
    <property type="evidence" value="ECO:0000314"/>
    <property type="project" value="RGD"/>
</dbReference>
<dbReference type="GO" id="GO:0019899">
    <property type="term" value="F:enzyme binding"/>
    <property type="evidence" value="ECO:0000314"/>
    <property type="project" value="RGD"/>
</dbReference>
<dbReference type="GO" id="GO:0042802">
    <property type="term" value="F:identical protein binding"/>
    <property type="evidence" value="ECO:0000315"/>
    <property type="project" value="RGD"/>
</dbReference>
<dbReference type="GO" id="GO:0016212">
    <property type="term" value="F:kynurenine-oxoglutarate transaminase activity"/>
    <property type="evidence" value="ECO:0007669"/>
    <property type="project" value="UniProtKB-EC"/>
</dbReference>
<dbReference type="GO" id="GO:0004069">
    <property type="term" value="F:L-aspartate:2-oxoglutarate aminotransferase activity"/>
    <property type="evidence" value="ECO:0000314"/>
    <property type="project" value="RGD"/>
</dbReference>
<dbReference type="GO" id="GO:0005543">
    <property type="term" value="F:phospholipid binding"/>
    <property type="evidence" value="ECO:0000314"/>
    <property type="project" value="RGD"/>
</dbReference>
<dbReference type="GO" id="GO:0030170">
    <property type="term" value="F:pyridoxal phosphate binding"/>
    <property type="evidence" value="ECO:0000314"/>
    <property type="project" value="RGD"/>
</dbReference>
<dbReference type="GO" id="GO:0006103">
    <property type="term" value="P:2-oxoglutarate metabolic process"/>
    <property type="evidence" value="ECO:0000250"/>
    <property type="project" value="UniProtKB"/>
</dbReference>
<dbReference type="GO" id="GO:0006520">
    <property type="term" value="P:amino acid metabolic process"/>
    <property type="evidence" value="ECO:0000314"/>
    <property type="project" value="RGD"/>
</dbReference>
<dbReference type="GO" id="GO:0006532">
    <property type="term" value="P:aspartate biosynthetic process"/>
    <property type="evidence" value="ECO:0000266"/>
    <property type="project" value="RGD"/>
</dbReference>
<dbReference type="GO" id="GO:0006533">
    <property type="term" value="P:aspartate catabolic process"/>
    <property type="evidence" value="ECO:0000266"/>
    <property type="project" value="RGD"/>
</dbReference>
<dbReference type="GO" id="GO:0006531">
    <property type="term" value="P:aspartate metabolic process"/>
    <property type="evidence" value="ECO:0000315"/>
    <property type="project" value="RGD"/>
</dbReference>
<dbReference type="GO" id="GO:0043648">
    <property type="term" value="P:dicarboxylic acid metabolic process"/>
    <property type="evidence" value="ECO:0000314"/>
    <property type="project" value="RGD"/>
</dbReference>
<dbReference type="GO" id="GO:0015908">
    <property type="term" value="P:fatty acid transport"/>
    <property type="evidence" value="ECO:0000266"/>
    <property type="project" value="RGD"/>
</dbReference>
<dbReference type="GO" id="GO:0007565">
    <property type="term" value="P:female pregnancy"/>
    <property type="evidence" value="ECO:0000270"/>
    <property type="project" value="RGD"/>
</dbReference>
<dbReference type="GO" id="GO:0006538">
    <property type="term" value="P:glutamate catabolic process"/>
    <property type="evidence" value="ECO:0000266"/>
    <property type="project" value="RGD"/>
</dbReference>
<dbReference type="GO" id="GO:0019550">
    <property type="term" value="P:glutamate catabolic process to aspartate"/>
    <property type="evidence" value="ECO:0000266"/>
    <property type="project" value="RGD"/>
</dbReference>
<dbReference type="GO" id="GO:0006536">
    <property type="term" value="P:glutamate metabolic process"/>
    <property type="evidence" value="ECO:0000250"/>
    <property type="project" value="UniProtKB"/>
</dbReference>
<dbReference type="GO" id="GO:0097054">
    <property type="term" value="P:L-glutamate biosynthetic process"/>
    <property type="evidence" value="ECO:0000314"/>
    <property type="project" value="RGD"/>
</dbReference>
<dbReference type="GO" id="GO:0007595">
    <property type="term" value="P:lactation"/>
    <property type="evidence" value="ECO:0000270"/>
    <property type="project" value="RGD"/>
</dbReference>
<dbReference type="GO" id="GO:0043490">
    <property type="term" value="P:malate-aspartate shuttle"/>
    <property type="evidence" value="ECO:0000266"/>
    <property type="project" value="RGD"/>
</dbReference>
<dbReference type="GO" id="GO:0006107">
    <property type="term" value="P:oxaloacetate metabolic process"/>
    <property type="evidence" value="ECO:0000314"/>
    <property type="project" value="RGD"/>
</dbReference>
<dbReference type="GO" id="GO:0045471">
    <property type="term" value="P:response to ethanol"/>
    <property type="evidence" value="ECO:0000266"/>
    <property type="project" value="RGD"/>
</dbReference>
<dbReference type="GO" id="GO:0032868">
    <property type="term" value="P:response to insulin"/>
    <property type="evidence" value="ECO:0000270"/>
    <property type="project" value="RGD"/>
</dbReference>
<dbReference type="GO" id="GO:0014850">
    <property type="term" value="P:response to muscle activity"/>
    <property type="evidence" value="ECO:0000270"/>
    <property type="project" value="RGD"/>
</dbReference>
<dbReference type="CDD" id="cd00609">
    <property type="entry name" value="AAT_like"/>
    <property type="match status" value="1"/>
</dbReference>
<dbReference type="FunFam" id="3.40.640.10:FF:000026">
    <property type="entry name" value="Aspartate aminotransferase"/>
    <property type="match status" value="1"/>
</dbReference>
<dbReference type="FunFam" id="3.90.1150.10:FF:000001">
    <property type="entry name" value="Aspartate aminotransferase"/>
    <property type="match status" value="1"/>
</dbReference>
<dbReference type="FunFam" id="3.90.1150.10:FF:000160">
    <property type="entry name" value="Similar to aspartate aminotransferase"/>
    <property type="match status" value="1"/>
</dbReference>
<dbReference type="Gene3D" id="3.90.1150.10">
    <property type="entry name" value="Aspartate Aminotransferase, domain 1"/>
    <property type="match status" value="1"/>
</dbReference>
<dbReference type="Gene3D" id="3.40.640.10">
    <property type="entry name" value="Type I PLP-dependent aspartate aminotransferase-like (Major domain)"/>
    <property type="match status" value="1"/>
</dbReference>
<dbReference type="InterPro" id="IPR004839">
    <property type="entry name" value="Aminotransferase_I/II_large"/>
</dbReference>
<dbReference type="InterPro" id="IPR000796">
    <property type="entry name" value="Asp_trans"/>
</dbReference>
<dbReference type="InterPro" id="IPR004838">
    <property type="entry name" value="NHTrfase_class1_PyrdxlP-BS"/>
</dbReference>
<dbReference type="InterPro" id="IPR015424">
    <property type="entry name" value="PyrdxlP-dep_Trfase"/>
</dbReference>
<dbReference type="InterPro" id="IPR015421">
    <property type="entry name" value="PyrdxlP-dep_Trfase_major"/>
</dbReference>
<dbReference type="InterPro" id="IPR015422">
    <property type="entry name" value="PyrdxlP-dep_Trfase_small"/>
</dbReference>
<dbReference type="NCBIfam" id="NF006719">
    <property type="entry name" value="PRK09257.1"/>
    <property type="match status" value="1"/>
</dbReference>
<dbReference type="PANTHER" id="PTHR11879">
    <property type="entry name" value="ASPARTATE AMINOTRANSFERASE"/>
    <property type="match status" value="1"/>
</dbReference>
<dbReference type="PANTHER" id="PTHR11879:SF22">
    <property type="entry name" value="ASPARTATE AMINOTRANSFERASE, MITOCHONDRIAL"/>
    <property type="match status" value="1"/>
</dbReference>
<dbReference type="Pfam" id="PF00155">
    <property type="entry name" value="Aminotran_1_2"/>
    <property type="match status" value="1"/>
</dbReference>
<dbReference type="PRINTS" id="PR00799">
    <property type="entry name" value="TRANSAMINASE"/>
</dbReference>
<dbReference type="SUPFAM" id="SSF53383">
    <property type="entry name" value="PLP-dependent transferases"/>
    <property type="match status" value="1"/>
</dbReference>
<dbReference type="PROSITE" id="PS00105">
    <property type="entry name" value="AA_TRANSFER_CLASS_1"/>
    <property type="match status" value="1"/>
</dbReference>
<organism>
    <name type="scientific">Rattus norvegicus</name>
    <name type="common">Rat</name>
    <dbReference type="NCBI Taxonomy" id="10116"/>
    <lineage>
        <taxon>Eukaryota</taxon>
        <taxon>Metazoa</taxon>
        <taxon>Chordata</taxon>
        <taxon>Craniata</taxon>
        <taxon>Vertebrata</taxon>
        <taxon>Euteleostomi</taxon>
        <taxon>Mammalia</taxon>
        <taxon>Eutheria</taxon>
        <taxon>Euarchontoglires</taxon>
        <taxon>Glires</taxon>
        <taxon>Rodentia</taxon>
        <taxon>Myomorpha</taxon>
        <taxon>Muroidea</taxon>
        <taxon>Muridae</taxon>
        <taxon>Murinae</taxon>
        <taxon>Rattus</taxon>
    </lineage>
</organism>
<proteinExistence type="evidence at protein level"/>
<accession>P00507</accession>
<accession>Q64551</accession>
<accession>Q9QV50</accession>
<evidence type="ECO:0000250" key="1"/>
<evidence type="ECO:0000250" key="2">
    <source>
        <dbReference type="UniProtKB" id="P00505"/>
    </source>
</evidence>
<evidence type="ECO:0000250" key="3">
    <source>
        <dbReference type="UniProtKB" id="P05202"/>
    </source>
</evidence>
<evidence type="ECO:0000250" key="4">
    <source>
        <dbReference type="UniProtKB" id="P12344"/>
    </source>
</evidence>
<evidence type="ECO:0000269" key="5">
    <source>
    </source>
</evidence>
<evidence type="ECO:0000269" key="6">
    <source>
    </source>
</evidence>
<evidence type="ECO:0000269" key="7">
    <source>
    </source>
</evidence>
<evidence type="ECO:0000269" key="8">
    <source>
    </source>
</evidence>
<evidence type="ECO:0000269" key="9">
    <source>
    </source>
</evidence>
<evidence type="ECO:0000305" key="10"/>